<organism>
    <name type="scientific">Thermus thermophilus (strain ATCC BAA-163 / DSM 7039 / HB27)</name>
    <dbReference type="NCBI Taxonomy" id="262724"/>
    <lineage>
        <taxon>Bacteria</taxon>
        <taxon>Thermotogati</taxon>
        <taxon>Deinococcota</taxon>
        <taxon>Deinococci</taxon>
        <taxon>Thermales</taxon>
        <taxon>Thermaceae</taxon>
        <taxon>Thermus</taxon>
    </lineage>
</organism>
<accession>Q72J47</accession>
<name>RPIA_THET2</name>
<feature type="chain" id="PRO_0000158486" description="Ribose-5-phosphate isomerase A">
    <location>
        <begin position="1"/>
        <end position="227"/>
    </location>
</feature>
<feature type="active site" description="Proton acceptor" evidence="1 2">
    <location>
        <position position="108"/>
    </location>
</feature>
<feature type="binding site">
    <location>
        <begin position="30"/>
        <end position="33"/>
    </location>
    <ligand>
        <name>substrate</name>
    </ligand>
</feature>
<feature type="binding site">
    <location>
        <begin position="86"/>
        <end position="89"/>
    </location>
    <ligand>
        <name>substrate</name>
    </ligand>
</feature>
<feature type="binding site">
    <location>
        <begin position="99"/>
        <end position="104"/>
    </location>
    <ligand>
        <name>substrate</name>
    </ligand>
</feature>
<feature type="binding site">
    <location>
        <position position="126"/>
    </location>
    <ligand>
        <name>substrate</name>
    </ligand>
</feature>
<feature type="helix" evidence="3">
    <location>
        <begin position="6"/>
        <end position="17"/>
    </location>
</feature>
<feature type="strand" evidence="3">
    <location>
        <begin position="25"/>
        <end position="28"/>
    </location>
</feature>
<feature type="helix" evidence="3">
    <location>
        <begin position="32"/>
        <end position="46"/>
    </location>
</feature>
<feature type="strand" evidence="3">
    <location>
        <begin position="54"/>
        <end position="59"/>
    </location>
</feature>
<feature type="helix" evidence="3">
    <location>
        <begin position="60"/>
        <end position="68"/>
    </location>
</feature>
<feature type="strand" evidence="3">
    <location>
        <begin position="81"/>
        <end position="86"/>
    </location>
</feature>
<feature type="strand" evidence="3">
    <location>
        <begin position="89"/>
        <end position="92"/>
    </location>
</feature>
<feature type="helix" evidence="3">
    <location>
        <begin position="93"/>
        <end position="95"/>
    </location>
</feature>
<feature type="strand" evidence="3">
    <location>
        <begin position="96"/>
        <end position="98"/>
    </location>
</feature>
<feature type="helix" evidence="3">
    <location>
        <begin position="105"/>
        <end position="113"/>
    </location>
</feature>
<feature type="strand" evidence="3">
    <location>
        <begin position="115"/>
        <end position="123"/>
    </location>
</feature>
<feature type="helix" evidence="3">
    <location>
        <begin position="124"/>
        <end position="126"/>
    </location>
</feature>
<feature type="strand" evidence="3">
    <location>
        <begin position="129"/>
        <end position="131"/>
    </location>
</feature>
<feature type="strand" evidence="3">
    <location>
        <begin position="136"/>
        <end position="140"/>
    </location>
</feature>
<feature type="helix" evidence="3">
    <location>
        <begin position="145"/>
        <end position="153"/>
    </location>
</feature>
<feature type="turn" evidence="3">
    <location>
        <begin position="154"/>
        <end position="156"/>
    </location>
</feature>
<feature type="strand" evidence="3">
    <location>
        <begin position="159"/>
        <end position="161"/>
    </location>
</feature>
<feature type="strand" evidence="3">
    <location>
        <begin position="176"/>
        <end position="180"/>
    </location>
</feature>
<feature type="helix" evidence="3">
    <location>
        <begin position="188"/>
        <end position="196"/>
    </location>
</feature>
<feature type="strand" evidence="3">
    <location>
        <begin position="201"/>
        <end position="207"/>
    </location>
</feature>
<feature type="strand" evidence="3">
    <location>
        <begin position="212"/>
        <end position="218"/>
    </location>
</feature>
<feature type="strand" evidence="3">
    <location>
        <begin position="221"/>
        <end position="225"/>
    </location>
</feature>
<sequence>MERPLESYKKEAAHAAIAYVQDGMVVGLGTGSTARYAVLELARRLREGELKGVVGVPTSRATEELAKREGIPLVDLPPEGVDLAIDGADEIAPGLALIKGMGGALLREKIVERAAKEFIVIADHTKKVPVLGRGPVPVEIVPFGYRATLKAIADLGGEPELRMDGDEFYFTDGGHLIADCRFGPIGDPLGLHRALLEIPGVVETGLFVGMATRALVAGPFGVEELLP</sequence>
<keyword id="KW-0002">3D-structure</keyword>
<keyword id="KW-0413">Isomerase</keyword>
<evidence type="ECO:0000255" key="1">
    <source>
        <dbReference type="HAMAP-Rule" id="MF_00170"/>
    </source>
</evidence>
<evidence type="ECO:0000269" key="2">
    <source>
    </source>
</evidence>
<evidence type="ECO:0007829" key="3">
    <source>
        <dbReference type="PDB" id="1UJ6"/>
    </source>
</evidence>
<dbReference type="EC" id="5.3.1.6" evidence="1"/>
<dbReference type="EMBL" id="AE017221">
    <property type="protein sequence ID" value="AAS81276.1"/>
    <property type="molecule type" value="Genomic_DNA"/>
</dbReference>
<dbReference type="RefSeq" id="WP_011173356.1">
    <property type="nucleotide sequence ID" value="NC_005835.1"/>
</dbReference>
<dbReference type="PDB" id="1UJ4">
    <property type="method" value="X-ray"/>
    <property type="resolution" value="1.80 A"/>
    <property type="chains" value="A=1-227"/>
</dbReference>
<dbReference type="PDB" id="1UJ5">
    <property type="method" value="X-ray"/>
    <property type="resolution" value="2.00 A"/>
    <property type="chains" value="A=1-227"/>
</dbReference>
<dbReference type="PDB" id="1UJ6">
    <property type="method" value="X-ray"/>
    <property type="resolution" value="1.74 A"/>
    <property type="chains" value="A=1-227"/>
</dbReference>
<dbReference type="PDBsum" id="1UJ4"/>
<dbReference type="PDBsum" id="1UJ5"/>
<dbReference type="PDBsum" id="1UJ6"/>
<dbReference type="SMR" id="Q72J47"/>
<dbReference type="KEGG" id="tth:TT_C0932"/>
<dbReference type="eggNOG" id="COG0120">
    <property type="taxonomic scope" value="Bacteria"/>
</dbReference>
<dbReference type="HOGENOM" id="CLU_056590_1_0_0"/>
<dbReference type="OrthoDB" id="5870696at2"/>
<dbReference type="UniPathway" id="UPA00115">
    <property type="reaction ID" value="UER00412"/>
</dbReference>
<dbReference type="EvolutionaryTrace" id="Q72J47"/>
<dbReference type="Proteomes" id="UP000000592">
    <property type="component" value="Chromosome"/>
</dbReference>
<dbReference type="GO" id="GO:0004751">
    <property type="term" value="F:ribose-5-phosphate isomerase activity"/>
    <property type="evidence" value="ECO:0007669"/>
    <property type="project" value="UniProtKB-UniRule"/>
</dbReference>
<dbReference type="GO" id="GO:0009052">
    <property type="term" value="P:pentose-phosphate shunt, non-oxidative branch"/>
    <property type="evidence" value="ECO:0007669"/>
    <property type="project" value="UniProtKB-UniRule"/>
</dbReference>
<dbReference type="CDD" id="cd01398">
    <property type="entry name" value="RPI_A"/>
    <property type="match status" value="1"/>
</dbReference>
<dbReference type="FunFam" id="3.40.50.1360:FF:000001">
    <property type="entry name" value="Ribose-5-phosphate isomerase A"/>
    <property type="match status" value="1"/>
</dbReference>
<dbReference type="Gene3D" id="3.30.70.260">
    <property type="match status" value="1"/>
</dbReference>
<dbReference type="Gene3D" id="3.40.50.1360">
    <property type="match status" value="1"/>
</dbReference>
<dbReference type="HAMAP" id="MF_00170">
    <property type="entry name" value="Rib_5P_isom_A"/>
    <property type="match status" value="1"/>
</dbReference>
<dbReference type="InterPro" id="IPR037171">
    <property type="entry name" value="NagB/RpiA_transferase-like"/>
</dbReference>
<dbReference type="InterPro" id="IPR050262">
    <property type="entry name" value="Ribose-5P_isomerase"/>
</dbReference>
<dbReference type="InterPro" id="IPR020672">
    <property type="entry name" value="Ribose5P_isomerase_typA_subgr"/>
</dbReference>
<dbReference type="InterPro" id="IPR004788">
    <property type="entry name" value="Ribose5P_isomerase_type_A"/>
</dbReference>
<dbReference type="NCBIfam" id="NF001924">
    <property type="entry name" value="PRK00702.1"/>
    <property type="match status" value="1"/>
</dbReference>
<dbReference type="NCBIfam" id="TIGR00021">
    <property type="entry name" value="rpiA"/>
    <property type="match status" value="1"/>
</dbReference>
<dbReference type="PANTHER" id="PTHR43748">
    <property type="entry name" value="RIBOSE-5-PHOSPHATE ISOMERASE 3, CHLOROPLASTIC-RELATED"/>
    <property type="match status" value="1"/>
</dbReference>
<dbReference type="PANTHER" id="PTHR43748:SF3">
    <property type="entry name" value="RIBOSE-5-PHOSPHATE ISOMERASE 3, CHLOROPLASTIC-RELATED"/>
    <property type="match status" value="1"/>
</dbReference>
<dbReference type="Pfam" id="PF06026">
    <property type="entry name" value="Rib_5-P_isom_A"/>
    <property type="match status" value="1"/>
</dbReference>
<dbReference type="SUPFAM" id="SSF75445">
    <property type="entry name" value="D-ribose-5-phosphate isomerase (RpiA), lid domain"/>
    <property type="match status" value="1"/>
</dbReference>
<dbReference type="SUPFAM" id="SSF100950">
    <property type="entry name" value="NagB/RpiA/CoA transferase-like"/>
    <property type="match status" value="1"/>
</dbReference>
<comment type="function">
    <text evidence="2">Involved in the first step of the non-oxidative branch of the pentose phosphate pathway. It catalyzes the reversible conversion of ribose-5-phosphate to ribulose 5-phosphate. Can also act on D-ribose-5-diphosphate and D-ribose-5-triphosphate as substrate.</text>
</comment>
<comment type="catalytic activity">
    <reaction evidence="1">
        <text>aldehydo-D-ribose 5-phosphate = D-ribulose 5-phosphate</text>
        <dbReference type="Rhea" id="RHEA:14657"/>
        <dbReference type="ChEBI" id="CHEBI:58121"/>
        <dbReference type="ChEBI" id="CHEBI:58273"/>
        <dbReference type="EC" id="5.3.1.6"/>
    </reaction>
</comment>
<comment type="biophysicochemical properties">
    <kinetics>
        <KM evidence="2">1.63 mM for ribose-5-phosphate (at 50 degrees Celsius)</KM>
        <text>kcat is 1072 sec(-1) for ribose-5-phosphate.</text>
    </kinetics>
</comment>
<comment type="pathway">
    <text evidence="1">Carbohydrate degradation; pentose phosphate pathway; D-ribose 5-phosphate from D-ribulose 5-phosphate (non-oxidative stage): step 1/1.</text>
</comment>
<comment type="subunit">
    <text evidence="1 2">Homodimer.</text>
</comment>
<comment type="similarity">
    <text evidence="1">Belongs to the ribose 5-phosphate isomerase family.</text>
</comment>
<proteinExistence type="evidence at protein level"/>
<reference key="1">
    <citation type="journal article" date="2004" name="Nat. Biotechnol.">
        <title>The genome sequence of the extreme thermophile Thermus thermophilus.</title>
        <authorList>
            <person name="Henne A."/>
            <person name="Brueggemann H."/>
            <person name="Raasch C."/>
            <person name="Wiezer A."/>
            <person name="Hartsch T."/>
            <person name="Liesegang H."/>
            <person name="Johann A."/>
            <person name="Lienard T."/>
            <person name="Gohl O."/>
            <person name="Martinez-Arias R."/>
            <person name="Jacobi C."/>
            <person name="Starkuviene V."/>
            <person name="Schlenczeck S."/>
            <person name="Dencker S."/>
            <person name="Huber R."/>
            <person name="Klenk H.-P."/>
            <person name="Kramer W."/>
            <person name="Merkl R."/>
            <person name="Gottschalk G."/>
            <person name="Fritz H.-J."/>
        </authorList>
    </citation>
    <scope>NUCLEOTIDE SEQUENCE [LARGE SCALE GENOMIC DNA]</scope>
    <source>
        <strain>ATCC BAA-163 / DSM 7039 / HB27</strain>
    </source>
</reference>
<reference key="2">
    <citation type="journal article" date="2003" name="J. Biol. Chem.">
        <title>Oxyanion hole-stabilized stereospecific isomerization in ribose-5-phosphate isomerase (Rpi).</title>
        <authorList>
            <person name="Hamada K."/>
            <person name="Ago H."/>
            <person name="Sugahara M."/>
            <person name="Nodake Y."/>
            <person name="Kuramitsu S."/>
            <person name="Miyano M."/>
        </authorList>
    </citation>
    <scope>X-RAY CRYSTALLOGRAPHY (1.74 ANGSTROMS) IN COMPLEX WITH SUBSTRATE ANALOGS</scope>
    <scope>FUNCTION</scope>
    <scope>ACTIVE SITE</scope>
    <scope>BIOPHYSICOCHEMICAL PROPERTIES</scope>
    <scope>REACTION MECHANISM</scope>
    <scope>SUBUNIT</scope>
</reference>
<gene>
    <name evidence="1" type="primary">rpiA</name>
    <name type="ordered locus">TT_C0932</name>
</gene>
<protein>
    <recommendedName>
        <fullName evidence="1">Ribose-5-phosphate isomerase A</fullName>
        <ecNumber evidence="1">5.3.1.6</ecNumber>
    </recommendedName>
    <alternativeName>
        <fullName evidence="1">Phosphoriboisomerase A</fullName>
        <shortName evidence="1">PRI</shortName>
    </alternativeName>
</protein>